<name>ATPL_SALAR</name>
<evidence type="ECO:0000255" key="1">
    <source>
        <dbReference type="HAMAP-Rule" id="MF_01396"/>
    </source>
</evidence>
<protein>
    <recommendedName>
        <fullName evidence="1">ATP synthase subunit c</fullName>
    </recommendedName>
    <alternativeName>
        <fullName evidence="1">ATP synthase F(0) sector subunit c</fullName>
    </alternativeName>
    <alternativeName>
        <fullName evidence="1">F-type ATPase subunit c</fullName>
        <shortName evidence="1">F-ATPase subunit c</shortName>
    </alternativeName>
    <alternativeName>
        <fullName evidence="1">Lipid-binding protein</fullName>
    </alternativeName>
</protein>
<keyword id="KW-0066">ATP synthesis</keyword>
<keyword id="KW-0997">Cell inner membrane</keyword>
<keyword id="KW-1003">Cell membrane</keyword>
<keyword id="KW-0138">CF(0)</keyword>
<keyword id="KW-0375">Hydrogen ion transport</keyword>
<keyword id="KW-0406">Ion transport</keyword>
<keyword id="KW-0446">Lipid-binding</keyword>
<keyword id="KW-0472">Membrane</keyword>
<keyword id="KW-1185">Reference proteome</keyword>
<keyword id="KW-0812">Transmembrane</keyword>
<keyword id="KW-1133">Transmembrane helix</keyword>
<keyword id="KW-0813">Transport</keyword>
<dbReference type="EMBL" id="CP000880">
    <property type="protein sequence ID" value="ABX23575.1"/>
    <property type="molecule type" value="Genomic_DNA"/>
</dbReference>
<dbReference type="SMR" id="A9MJR4"/>
<dbReference type="STRING" id="41514.SARI_03781"/>
<dbReference type="KEGG" id="ses:SARI_03781"/>
<dbReference type="HOGENOM" id="CLU_148047_1_0_6"/>
<dbReference type="Proteomes" id="UP000002084">
    <property type="component" value="Chromosome"/>
</dbReference>
<dbReference type="GO" id="GO:0005886">
    <property type="term" value="C:plasma membrane"/>
    <property type="evidence" value="ECO:0007669"/>
    <property type="project" value="UniProtKB-SubCell"/>
</dbReference>
<dbReference type="GO" id="GO:0045259">
    <property type="term" value="C:proton-transporting ATP synthase complex"/>
    <property type="evidence" value="ECO:0007669"/>
    <property type="project" value="UniProtKB-KW"/>
</dbReference>
<dbReference type="GO" id="GO:0033177">
    <property type="term" value="C:proton-transporting two-sector ATPase complex, proton-transporting domain"/>
    <property type="evidence" value="ECO:0007669"/>
    <property type="project" value="InterPro"/>
</dbReference>
<dbReference type="GO" id="GO:0008289">
    <property type="term" value="F:lipid binding"/>
    <property type="evidence" value="ECO:0007669"/>
    <property type="project" value="UniProtKB-KW"/>
</dbReference>
<dbReference type="GO" id="GO:0046933">
    <property type="term" value="F:proton-transporting ATP synthase activity, rotational mechanism"/>
    <property type="evidence" value="ECO:0007669"/>
    <property type="project" value="UniProtKB-UniRule"/>
</dbReference>
<dbReference type="CDD" id="cd18185">
    <property type="entry name" value="ATP-synt_Fo_c_ATPE"/>
    <property type="match status" value="1"/>
</dbReference>
<dbReference type="FunFam" id="1.20.20.10:FF:000002">
    <property type="entry name" value="ATP synthase subunit c"/>
    <property type="match status" value="1"/>
</dbReference>
<dbReference type="Gene3D" id="1.20.20.10">
    <property type="entry name" value="F1F0 ATP synthase subunit C"/>
    <property type="match status" value="1"/>
</dbReference>
<dbReference type="HAMAP" id="MF_01396">
    <property type="entry name" value="ATP_synth_c_bact"/>
    <property type="match status" value="1"/>
</dbReference>
<dbReference type="InterPro" id="IPR005953">
    <property type="entry name" value="ATP_synth_csu_bac/chlpt"/>
</dbReference>
<dbReference type="InterPro" id="IPR000454">
    <property type="entry name" value="ATP_synth_F0_csu"/>
</dbReference>
<dbReference type="InterPro" id="IPR020537">
    <property type="entry name" value="ATP_synth_F0_csu_DDCD_BS"/>
</dbReference>
<dbReference type="InterPro" id="IPR038662">
    <property type="entry name" value="ATP_synth_F0_csu_sf"/>
</dbReference>
<dbReference type="InterPro" id="IPR002379">
    <property type="entry name" value="ATPase_proteolipid_c-like_dom"/>
</dbReference>
<dbReference type="InterPro" id="IPR035921">
    <property type="entry name" value="F/V-ATP_Csub_sf"/>
</dbReference>
<dbReference type="NCBIfam" id="TIGR01260">
    <property type="entry name" value="ATP_synt_c"/>
    <property type="match status" value="1"/>
</dbReference>
<dbReference type="NCBIfam" id="NF005363">
    <property type="entry name" value="PRK06876.1"/>
    <property type="match status" value="1"/>
</dbReference>
<dbReference type="Pfam" id="PF00137">
    <property type="entry name" value="ATP-synt_C"/>
    <property type="match status" value="1"/>
</dbReference>
<dbReference type="PRINTS" id="PR00124">
    <property type="entry name" value="ATPASEC"/>
</dbReference>
<dbReference type="SUPFAM" id="SSF81333">
    <property type="entry name" value="F1F0 ATP synthase subunit C"/>
    <property type="match status" value="1"/>
</dbReference>
<dbReference type="PROSITE" id="PS00605">
    <property type="entry name" value="ATPASE_C"/>
    <property type="match status" value="1"/>
</dbReference>
<feature type="chain" id="PRO_1000184454" description="ATP synthase subunit c">
    <location>
        <begin position="1"/>
        <end position="79"/>
    </location>
</feature>
<feature type="transmembrane region" description="Helical" evidence="1">
    <location>
        <begin position="11"/>
        <end position="31"/>
    </location>
</feature>
<feature type="transmembrane region" description="Helical" evidence="1">
    <location>
        <begin position="53"/>
        <end position="73"/>
    </location>
</feature>
<feature type="site" description="Reversibly protonated during proton transport" evidence="1">
    <location>
        <position position="61"/>
    </location>
</feature>
<proteinExistence type="inferred from homology"/>
<accession>A9MJR4</accession>
<sequence length="79" mass="8256">MENLNMDLLYMAAAVMMGLAAIGAAIGIGILGGKFLEGAARQPDLIPLLRTQFFIVMGLVDAIPMIAVGLGLYVMFAVA</sequence>
<organism>
    <name type="scientific">Salmonella arizonae (strain ATCC BAA-731 / CDC346-86 / RSK2980)</name>
    <dbReference type="NCBI Taxonomy" id="41514"/>
    <lineage>
        <taxon>Bacteria</taxon>
        <taxon>Pseudomonadati</taxon>
        <taxon>Pseudomonadota</taxon>
        <taxon>Gammaproteobacteria</taxon>
        <taxon>Enterobacterales</taxon>
        <taxon>Enterobacteriaceae</taxon>
        <taxon>Salmonella</taxon>
    </lineage>
</organism>
<gene>
    <name evidence="1" type="primary">atpE</name>
    <name type="ordered locus">SARI_03781</name>
</gene>
<reference key="1">
    <citation type="submission" date="2007-11" db="EMBL/GenBank/DDBJ databases">
        <authorList>
            <consortium name="The Salmonella enterica serovar Arizonae Genome Sequencing Project"/>
            <person name="McClelland M."/>
            <person name="Sanderson E.K."/>
            <person name="Porwollik S."/>
            <person name="Spieth J."/>
            <person name="Clifton W.S."/>
            <person name="Fulton R."/>
            <person name="Chunyan W."/>
            <person name="Wollam A."/>
            <person name="Shah N."/>
            <person name="Pepin K."/>
            <person name="Bhonagiri V."/>
            <person name="Nash W."/>
            <person name="Johnson M."/>
            <person name="Thiruvilangam P."/>
            <person name="Wilson R."/>
        </authorList>
    </citation>
    <scope>NUCLEOTIDE SEQUENCE [LARGE SCALE GENOMIC DNA]</scope>
    <source>
        <strain>ATCC BAA-731 / CDC346-86 / RSK2980</strain>
    </source>
</reference>
<comment type="function">
    <text evidence="1">F(1)F(0) ATP synthase produces ATP from ADP in the presence of a proton or sodium gradient. F-type ATPases consist of two structural domains, F(1) containing the extramembraneous catalytic core and F(0) containing the membrane proton channel, linked together by a central stalk and a peripheral stalk. During catalysis, ATP synthesis in the catalytic domain of F(1) is coupled via a rotary mechanism of the central stalk subunits to proton translocation.</text>
</comment>
<comment type="function">
    <text evidence="1">Key component of the F(0) channel; it plays a direct role in translocation across the membrane. A homomeric c-ring of between 10-14 subunits forms the central stalk rotor element with the F(1) delta and epsilon subunits.</text>
</comment>
<comment type="subunit">
    <text evidence="1">F-type ATPases have 2 components, F(1) - the catalytic core - and F(0) - the membrane proton channel. F(1) has five subunits: alpha(3), beta(3), gamma(1), delta(1), epsilon(1). F(0) has three main subunits: a(1), b(2) and c(10-14). The alpha and beta chains form an alternating ring which encloses part of the gamma chain. F(1) is attached to F(0) by a central stalk formed by the gamma and epsilon chains, while a peripheral stalk is formed by the delta and b chains.</text>
</comment>
<comment type="subcellular location">
    <subcellularLocation>
        <location evidence="1">Cell inner membrane</location>
        <topology evidence="1">Multi-pass membrane protein</topology>
    </subcellularLocation>
</comment>
<comment type="similarity">
    <text evidence="1">Belongs to the ATPase C chain family.</text>
</comment>